<protein>
    <recommendedName>
        <fullName evidence="1">Nucleoside diphosphate kinase</fullName>
        <shortName evidence="1">NDK</shortName>
        <shortName evidence="1">NDP kinase</shortName>
        <ecNumber evidence="1">2.7.4.6</ecNumber>
    </recommendedName>
    <alternativeName>
        <fullName evidence="1">Nucleoside-2-P kinase</fullName>
    </alternativeName>
</protein>
<keyword id="KW-0067">ATP-binding</keyword>
<keyword id="KW-0963">Cytoplasm</keyword>
<keyword id="KW-0418">Kinase</keyword>
<keyword id="KW-0460">Magnesium</keyword>
<keyword id="KW-0479">Metal-binding</keyword>
<keyword id="KW-0546">Nucleotide metabolism</keyword>
<keyword id="KW-0547">Nucleotide-binding</keyword>
<keyword id="KW-0597">Phosphoprotein</keyword>
<keyword id="KW-0808">Transferase</keyword>
<evidence type="ECO:0000255" key="1">
    <source>
        <dbReference type="HAMAP-Rule" id="MF_00451"/>
    </source>
</evidence>
<sequence length="138" mass="15612">MVMQRTFVMIKPDGVKRGLIGEIISRFEKRGLKIVSLKMVKMSRDIAEKLYDEHKGKSFFEELVNYVTSGPVVCMVIEGDDVVQVIRRMIGNTDPKEAPPGTIRGDYALSKSENVIHASDSIEKAQREMSLFFDKSDL</sequence>
<name>NDK_SACI4</name>
<feature type="chain" id="PRO_1000206226" description="Nucleoside diphosphate kinase">
    <location>
        <begin position="1"/>
        <end position="138"/>
    </location>
</feature>
<feature type="active site" description="Pros-phosphohistidine intermediate" evidence="1">
    <location>
        <position position="117"/>
    </location>
</feature>
<feature type="binding site" evidence="1">
    <location>
        <position position="11"/>
    </location>
    <ligand>
        <name>ATP</name>
        <dbReference type="ChEBI" id="CHEBI:30616"/>
    </ligand>
</feature>
<feature type="binding site" evidence="1">
    <location>
        <position position="59"/>
    </location>
    <ligand>
        <name>ATP</name>
        <dbReference type="ChEBI" id="CHEBI:30616"/>
    </ligand>
</feature>
<feature type="binding site" evidence="1">
    <location>
        <position position="87"/>
    </location>
    <ligand>
        <name>ATP</name>
        <dbReference type="ChEBI" id="CHEBI:30616"/>
    </ligand>
</feature>
<feature type="binding site" evidence="1">
    <location>
        <position position="93"/>
    </location>
    <ligand>
        <name>ATP</name>
        <dbReference type="ChEBI" id="CHEBI:30616"/>
    </ligand>
</feature>
<feature type="binding site" evidence="1">
    <location>
        <position position="104"/>
    </location>
    <ligand>
        <name>ATP</name>
        <dbReference type="ChEBI" id="CHEBI:30616"/>
    </ligand>
</feature>
<feature type="binding site" evidence="1">
    <location>
        <position position="114"/>
    </location>
    <ligand>
        <name>ATP</name>
        <dbReference type="ChEBI" id="CHEBI:30616"/>
    </ligand>
</feature>
<reference key="1">
    <citation type="journal article" date="2009" name="Proc. Natl. Acad. Sci. U.S.A.">
        <title>Biogeography of the Sulfolobus islandicus pan-genome.</title>
        <authorList>
            <person name="Reno M.L."/>
            <person name="Held N.L."/>
            <person name="Fields C.J."/>
            <person name="Burke P.V."/>
            <person name="Whitaker R.J."/>
        </authorList>
    </citation>
    <scope>NUCLEOTIDE SEQUENCE [LARGE SCALE GENOMIC DNA]</scope>
    <source>
        <strain>M.14.25 / Kamchatka #1</strain>
    </source>
</reference>
<proteinExistence type="inferred from homology"/>
<gene>
    <name evidence="1" type="primary">ndk</name>
    <name type="ordered locus">M1425_1908</name>
</gene>
<organism>
    <name type="scientific">Saccharolobus islandicus (strain M.14.25 / Kamchatka #1)</name>
    <name type="common">Sulfolobus islandicus</name>
    <dbReference type="NCBI Taxonomy" id="427317"/>
    <lineage>
        <taxon>Archaea</taxon>
        <taxon>Thermoproteota</taxon>
        <taxon>Thermoprotei</taxon>
        <taxon>Sulfolobales</taxon>
        <taxon>Sulfolobaceae</taxon>
        <taxon>Saccharolobus</taxon>
    </lineage>
</organism>
<dbReference type="EC" id="2.7.4.6" evidence="1"/>
<dbReference type="EMBL" id="CP001400">
    <property type="protein sequence ID" value="ACP38652.1"/>
    <property type="molecule type" value="Genomic_DNA"/>
</dbReference>
<dbReference type="RefSeq" id="WP_012711881.1">
    <property type="nucleotide sequence ID" value="NC_012588.1"/>
</dbReference>
<dbReference type="SMR" id="C3MY95"/>
<dbReference type="GeneID" id="84062220"/>
<dbReference type="KEGG" id="sia:M1425_1908"/>
<dbReference type="HOGENOM" id="CLU_060216_6_3_2"/>
<dbReference type="Proteomes" id="UP000001350">
    <property type="component" value="Chromosome"/>
</dbReference>
<dbReference type="GO" id="GO:0005737">
    <property type="term" value="C:cytoplasm"/>
    <property type="evidence" value="ECO:0007669"/>
    <property type="project" value="UniProtKB-SubCell"/>
</dbReference>
<dbReference type="GO" id="GO:0005524">
    <property type="term" value="F:ATP binding"/>
    <property type="evidence" value="ECO:0007669"/>
    <property type="project" value="UniProtKB-UniRule"/>
</dbReference>
<dbReference type="GO" id="GO:0046872">
    <property type="term" value="F:metal ion binding"/>
    <property type="evidence" value="ECO:0007669"/>
    <property type="project" value="UniProtKB-KW"/>
</dbReference>
<dbReference type="GO" id="GO:0004550">
    <property type="term" value="F:nucleoside diphosphate kinase activity"/>
    <property type="evidence" value="ECO:0007669"/>
    <property type="project" value="UniProtKB-UniRule"/>
</dbReference>
<dbReference type="GO" id="GO:0006241">
    <property type="term" value="P:CTP biosynthetic process"/>
    <property type="evidence" value="ECO:0007669"/>
    <property type="project" value="UniProtKB-UniRule"/>
</dbReference>
<dbReference type="GO" id="GO:0006183">
    <property type="term" value="P:GTP biosynthetic process"/>
    <property type="evidence" value="ECO:0007669"/>
    <property type="project" value="UniProtKB-UniRule"/>
</dbReference>
<dbReference type="GO" id="GO:0006228">
    <property type="term" value="P:UTP biosynthetic process"/>
    <property type="evidence" value="ECO:0007669"/>
    <property type="project" value="UniProtKB-UniRule"/>
</dbReference>
<dbReference type="CDD" id="cd04413">
    <property type="entry name" value="NDPk_I"/>
    <property type="match status" value="1"/>
</dbReference>
<dbReference type="FunFam" id="3.30.70.141:FF:000003">
    <property type="entry name" value="Nucleoside diphosphate kinase"/>
    <property type="match status" value="1"/>
</dbReference>
<dbReference type="Gene3D" id="3.30.70.141">
    <property type="entry name" value="Nucleoside diphosphate kinase-like domain"/>
    <property type="match status" value="1"/>
</dbReference>
<dbReference type="HAMAP" id="MF_00451">
    <property type="entry name" value="NDP_kinase"/>
    <property type="match status" value="1"/>
</dbReference>
<dbReference type="InterPro" id="IPR034907">
    <property type="entry name" value="NDK-like_dom"/>
</dbReference>
<dbReference type="InterPro" id="IPR036850">
    <property type="entry name" value="NDK-like_dom_sf"/>
</dbReference>
<dbReference type="InterPro" id="IPR001564">
    <property type="entry name" value="Nucleoside_diP_kinase"/>
</dbReference>
<dbReference type="InterPro" id="IPR023005">
    <property type="entry name" value="Nucleoside_diP_kinase_AS"/>
</dbReference>
<dbReference type="NCBIfam" id="NF001908">
    <property type="entry name" value="PRK00668.1"/>
    <property type="match status" value="1"/>
</dbReference>
<dbReference type="PANTHER" id="PTHR11349">
    <property type="entry name" value="NUCLEOSIDE DIPHOSPHATE KINASE"/>
    <property type="match status" value="1"/>
</dbReference>
<dbReference type="Pfam" id="PF00334">
    <property type="entry name" value="NDK"/>
    <property type="match status" value="1"/>
</dbReference>
<dbReference type="PRINTS" id="PR01243">
    <property type="entry name" value="NUCDPKINASE"/>
</dbReference>
<dbReference type="SMART" id="SM00562">
    <property type="entry name" value="NDK"/>
    <property type="match status" value="1"/>
</dbReference>
<dbReference type="SUPFAM" id="SSF54919">
    <property type="entry name" value="Nucleoside diphosphate kinase, NDK"/>
    <property type="match status" value="1"/>
</dbReference>
<dbReference type="PROSITE" id="PS00469">
    <property type="entry name" value="NDPK"/>
    <property type="match status" value="1"/>
</dbReference>
<dbReference type="PROSITE" id="PS51374">
    <property type="entry name" value="NDPK_LIKE"/>
    <property type="match status" value="1"/>
</dbReference>
<accession>C3MY95</accession>
<comment type="function">
    <text evidence="1">Major role in the synthesis of nucleoside triphosphates other than ATP. The ATP gamma phosphate is transferred to the NDP beta phosphate via a ping-pong mechanism, using a phosphorylated active-site intermediate.</text>
</comment>
<comment type="catalytic activity">
    <reaction evidence="1">
        <text>a 2'-deoxyribonucleoside 5'-diphosphate + ATP = a 2'-deoxyribonucleoside 5'-triphosphate + ADP</text>
        <dbReference type="Rhea" id="RHEA:44640"/>
        <dbReference type="ChEBI" id="CHEBI:30616"/>
        <dbReference type="ChEBI" id="CHEBI:61560"/>
        <dbReference type="ChEBI" id="CHEBI:73316"/>
        <dbReference type="ChEBI" id="CHEBI:456216"/>
        <dbReference type="EC" id="2.7.4.6"/>
    </reaction>
</comment>
<comment type="catalytic activity">
    <reaction evidence="1">
        <text>a ribonucleoside 5'-diphosphate + ATP = a ribonucleoside 5'-triphosphate + ADP</text>
        <dbReference type="Rhea" id="RHEA:18113"/>
        <dbReference type="ChEBI" id="CHEBI:30616"/>
        <dbReference type="ChEBI" id="CHEBI:57930"/>
        <dbReference type="ChEBI" id="CHEBI:61557"/>
        <dbReference type="ChEBI" id="CHEBI:456216"/>
        <dbReference type="EC" id="2.7.4.6"/>
    </reaction>
</comment>
<comment type="cofactor">
    <cofactor evidence="1">
        <name>Mg(2+)</name>
        <dbReference type="ChEBI" id="CHEBI:18420"/>
    </cofactor>
</comment>
<comment type="subcellular location">
    <subcellularLocation>
        <location evidence="1">Cytoplasm</location>
    </subcellularLocation>
</comment>
<comment type="similarity">
    <text evidence="1">Belongs to the NDK family.</text>
</comment>